<sequence length="2046" mass="238002">MIRVLGLLWDPLSSWVEVSGPIILFGLYYGFIATLPFGPSKIYSMRSFFLGETLYGIIAISGSITGQLIVFLSMYYSPIYAALWKPHAITLLVIPYTFCRVFRSLEKPSSPESTHPMNSIKNPKILSLFMGGLILQLLNPILLANPVLTRLVNLFLFRYSDNISFMISSFCGWLGGHILFINLTKLVSLRLVSFRIERNSPIDHTSLRRYIHQTFSVLLISYFSFYLGRSPLIFHRKKKDNKKKDRSAAMAKKDRSVAMAKKNCSVAMVKKDRSVAEDEDRSVAMAKKGRSVAEDEDRSEPLAMVMVQEARSVSFIAKKARSVAEDKDPEDEHRSVAMAKKARSVAEDKDPEDEHRSVAMAKKDRSVAEDEDRSVAMAKKDRSVAEDEDRSVAEDEDRSVAEDEDRSVAEDEDRSVAEDEDRSVAEDEDRFVAEDEDRSVAEDEDRSVAEDEDRSVAEDEDPEDEDRSVPREQKKLKGLPISWFKQPCPIKFFDPDRIYQPIRYIGNSPFHCLKPVMRTEVSQYFFGAYSSDGKKRISFTLLPSVLALGEKLGKYRDLLDTSCLSEDPYHRWNHTMKRRRDSLENEFSDRVKALSHGSPAENVIERRVKFSNSQGDSFTEMYDPLLNGALRGTIDQFESPKMLNDLIISIISNLSDFIEIPIKDCKEGFPNDQFGYGYHISEHWQELEHKSFRLPWEPLPTDTFRSLVPSTKSSRRGKVEPISKRLYPLAERIIPNKAKKIFEEYLSNIDSSFGKLIYPKDLLEMQIQEIYTKDDDSLIHFLWLEIAFRVAYMDLAPEIASCNERIYTNSLVNIYNRIDGRNVAPTGTVKWELILSLFTTKQIFLFESLAQHEWTILRNCRGNVSTDDSTQTKDFIDLYGKILLNEPLQFREIKKHLPRWPSDLMRAERDGDGDDRGPIQISTSRIRTRKVKSKLTLDFGKERIVLKRYHAESDYRRSLIRGSMRAKRRKIMIWKRVQPNVHSLFFLRRMEIPTYPKDYYDTFDSGRVNQEQIQKEVREKIHRGKYLDPVLHNTTLAEQVCLAWPEVHYFRGLILVAQSNIRKNIILPSLIIAKNIGRILLFKAPEFAQDWEEMKEELHIKCGSDGTEFSKKGFPDKWYKYGMQIKLIFPFRLKPWHSQSKKRLRLRWSYLTTLGFETDIPFGDPKPKLGIFSEFFQPIFKKVKKGLKKGLKKGLKKGLKRELILFKKVKRRLMGSTGIRRVSRVRYIDKSELNDRIQNKLLSETETTPMGSANDSSEVNDQFGYETQTINVKDPDDWTTTMKERIESIAIINSSPITGMSLMDSEIHTGSKGSFNILGSTLKKRLVQIRRIPGRFRNKSVQLIRKRFYSMKLMKLFLKRMDRYLLLSVIHFIGSNIKFWIRSAWIRSTGNIATIYGRIFIINNDISKINRGKITNYYSINEKRKDFEIRPDRNMLSMSQAYVFHKIWQIGAIDRSYSKYFLKYRAQTSYPLIKKKIKELLDIQRILDHEKPQDLKENDWKQWLRCFDRYKLSPQIWSRINPQKWRNRVNKQCTCYEERFIPYEKKKDYIFATVIEPSLGLLRKMNKRYRYDLLSYSYLNSTKELDILNLTKDSDILNLTKDSDILNLTKDSDILNLTKDSDILNLTKDSDTLKIEKRRSGLDLKFWLFPELSGKENIYDNSKFIPGYSILSEAQERKKIEEKEREERIKVIEERIGIIRSDVQNKKVEEKQTGTGEVEEKQTGKVKQKQFGLKVEDQKTDGKKKTNQVLVQHKILKDIGEEDISDLAGMCRILIEIEDPTKFMQIYEENINLNLMFLIIYEDLKGYEKYINARDSNANDINANDINANDINAKDSNANDINAKDSNANDINANDSNAKDSNANDINAKDINAKDSNANDINAKDSNADVPKKKEDEIPKTVVSSEPYRLSSIVNDNLLIYKIVSMWLKSEKIKRAGLGDDKNILSSFNLEDILLPKRRREFRILNRFDLENDHVGFFNGKSIQNDEELMGRDQHLSVDTTQRIKRFLWPSYRLEDLLCMNRYWFNTNDGSRSAMLRIRMYPLNVN</sequence>
<keyword id="KW-0150">Chloroplast</keyword>
<keyword id="KW-0472">Membrane</keyword>
<keyword id="KW-0934">Plastid</keyword>
<keyword id="KW-1001">Plastid inner membrane</keyword>
<keyword id="KW-0653">Protein transport</keyword>
<keyword id="KW-0812">Transmembrane</keyword>
<keyword id="KW-1133">Transmembrane helix</keyword>
<keyword id="KW-0813">Transport</keyword>
<organism>
    <name type="scientific">Pinus koraiensis</name>
    <name type="common">Korean pine</name>
    <dbReference type="NCBI Taxonomy" id="88728"/>
    <lineage>
        <taxon>Eukaryota</taxon>
        <taxon>Viridiplantae</taxon>
        <taxon>Streptophyta</taxon>
        <taxon>Embryophyta</taxon>
        <taxon>Tracheophyta</taxon>
        <taxon>Spermatophyta</taxon>
        <taxon>Pinopsida</taxon>
        <taxon>Pinidae</taxon>
        <taxon>Conifers I</taxon>
        <taxon>Pinales</taxon>
        <taxon>Pinaceae</taxon>
        <taxon>Pinus</taxon>
        <taxon>Pinus subgen. Strobus</taxon>
    </lineage>
</organism>
<evidence type="ECO:0000250" key="1">
    <source>
        <dbReference type="UniProtKB" id="P56785"/>
    </source>
</evidence>
<evidence type="ECO:0000255" key="2"/>
<evidence type="ECO:0000256" key="3">
    <source>
        <dbReference type="SAM" id="MobiDB-lite"/>
    </source>
</evidence>
<evidence type="ECO:0000305" key="4"/>
<name>TI214_PINKO</name>
<geneLocation type="chloroplast"/>
<comment type="function">
    <text evidence="1">Involved in protein precursor import into chloroplasts. May be part of an intermediate translocation complex acting as a protein-conducting channel at the inner envelope.</text>
</comment>
<comment type="subunit">
    <text evidence="1">Part of the Tic complex.</text>
</comment>
<comment type="subcellular location">
    <subcellularLocation>
        <location evidence="1">Plastid</location>
        <location evidence="1">Chloroplast inner membrane</location>
        <topology evidence="2">Multi-pass membrane protein</topology>
    </subcellularLocation>
</comment>
<comment type="similarity">
    <text evidence="4">Belongs to the TIC214 family.</text>
</comment>
<protein>
    <recommendedName>
        <fullName evidence="1">Protein TIC 214</fullName>
    </recommendedName>
    <alternativeName>
        <fullName evidence="1">Translocon at the inner envelope membrane of chloroplasts 214</fullName>
        <shortName evidence="1">AtTIC214</shortName>
    </alternativeName>
</protein>
<proteinExistence type="inferred from homology"/>
<dbReference type="EMBL" id="AY228468">
    <property type="protein sequence ID" value="ABP35463.1"/>
    <property type="molecule type" value="Genomic_DNA"/>
</dbReference>
<dbReference type="RefSeq" id="YP_001152223.1">
    <property type="nucleotide sequence ID" value="NC_004677.2"/>
</dbReference>
<dbReference type="GeneID" id="5048614"/>
<dbReference type="GO" id="GO:0009706">
    <property type="term" value="C:chloroplast inner membrane"/>
    <property type="evidence" value="ECO:0007669"/>
    <property type="project" value="UniProtKB-SubCell"/>
</dbReference>
<dbReference type="GO" id="GO:0015031">
    <property type="term" value="P:protein transport"/>
    <property type="evidence" value="ECO:0007669"/>
    <property type="project" value="UniProtKB-KW"/>
</dbReference>
<dbReference type="InterPro" id="IPR008896">
    <property type="entry name" value="TIC214"/>
</dbReference>
<dbReference type="PANTHER" id="PTHR33163:SF40">
    <property type="entry name" value="PROTEIN TIC 214"/>
    <property type="match status" value="1"/>
</dbReference>
<dbReference type="PANTHER" id="PTHR33163">
    <property type="entry name" value="PROTEIN TIC 214-RELATED"/>
    <property type="match status" value="1"/>
</dbReference>
<dbReference type="Pfam" id="PF05758">
    <property type="entry name" value="Ycf1"/>
    <property type="match status" value="3"/>
</dbReference>
<reference key="1">
    <citation type="submission" date="2003-02" db="EMBL/GenBank/DDBJ databases">
        <title>Complete nucleotide sequence of Pinus koraiensis.</title>
        <authorList>
            <person name="Noh E.W."/>
            <person name="Lee J.S."/>
            <person name="Choi Y.I."/>
            <person name="Han M.S."/>
            <person name="Yi Y.S."/>
            <person name="Han S.U."/>
        </authorList>
    </citation>
    <scope>NUCLEOTIDE SEQUENCE [LARGE SCALE GENOMIC DNA]</scope>
    <source>
        <strain>KangWon16</strain>
    </source>
</reference>
<reference key="2">
    <citation type="submission" date="2007-04" db="EMBL/GenBank/DDBJ databases">
        <authorList>
            <person name="Noh E.W."/>
            <person name="Lee J.S."/>
            <person name="Choi Y.I."/>
            <person name="Han M.S."/>
            <person name="Yi Y.S."/>
            <person name="Han S.U."/>
        </authorList>
    </citation>
    <scope>SEQUENCE REVISION</scope>
</reference>
<feature type="chain" id="PRO_0000262623" description="Protein TIC 214">
    <location>
        <begin position="1"/>
        <end position="2046"/>
    </location>
</feature>
<feature type="transmembrane region" description="Helical; Name=1" evidence="2">
    <location>
        <begin position="18"/>
        <end position="38"/>
    </location>
</feature>
<feature type="transmembrane region" description="Helical; Name=2" evidence="2">
    <location>
        <begin position="54"/>
        <end position="74"/>
    </location>
</feature>
<feature type="transmembrane region" description="Helical; Name=3" evidence="2">
    <location>
        <begin position="79"/>
        <end position="99"/>
    </location>
</feature>
<feature type="transmembrane region" description="Helical; Name=4" evidence="2">
    <location>
        <begin position="125"/>
        <end position="145"/>
    </location>
</feature>
<feature type="transmembrane region" description="Helical; Name=5" evidence="2">
    <location>
        <begin position="163"/>
        <end position="183"/>
    </location>
</feature>
<feature type="transmembrane region" description="Helical; Name=6" evidence="2">
    <location>
        <begin position="214"/>
        <end position="234"/>
    </location>
</feature>
<feature type="region of interest" description="Disordered" evidence="3">
    <location>
        <begin position="278"/>
        <end position="299"/>
    </location>
</feature>
<feature type="region of interest" description="Disordered" evidence="3">
    <location>
        <begin position="320"/>
        <end position="472"/>
    </location>
</feature>
<feature type="region of interest" description="Disordered" evidence="3">
    <location>
        <begin position="1833"/>
        <end position="1898"/>
    </location>
</feature>
<feature type="compositionally biased region" description="Basic and acidic residues" evidence="3">
    <location>
        <begin position="322"/>
        <end position="335"/>
    </location>
</feature>
<feature type="compositionally biased region" description="Basic and acidic residues" evidence="3">
    <location>
        <begin position="344"/>
        <end position="368"/>
    </location>
</feature>
<feature type="compositionally biased region" description="Basic and acidic residues" evidence="3">
    <location>
        <begin position="378"/>
        <end position="457"/>
    </location>
</feature>
<feature type="compositionally biased region" description="Low complexity" evidence="3">
    <location>
        <begin position="1833"/>
        <end position="1866"/>
    </location>
</feature>
<feature type="compositionally biased region" description="Basic and acidic residues" evidence="3">
    <location>
        <begin position="1882"/>
        <end position="1898"/>
    </location>
</feature>
<accession>Q85WU2</accession>
<accession>A4QMC6</accession>
<gene>
    <name evidence="1" type="primary">TIC214</name>
    <name type="synonym">ycf1</name>
</gene>